<reference key="1">
    <citation type="journal article" date="2001" name="Lancet">
        <title>Whole genome sequencing of meticillin-resistant Staphylococcus aureus.</title>
        <authorList>
            <person name="Kuroda M."/>
            <person name="Ohta T."/>
            <person name="Uchiyama I."/>
            <person name="Baba T."/>
            <person name="Yuzawa H."/>
            <person name="Kobayashi I."/>
            <person name="Cui L."/>
            <person name="Oguchi A."/>
            <person name="Aoki K."/>
            <person name="Nagai Y."/>
            <person name="Lian J.-Q."/>
            <person name="Ito T."/>
            <person name="Kanamori M."/>
            <person name="Matsumaru H."/>
            <person name="Maruyama A."/>
            <person name="Murakami H."/>
            <person name="Hosoyama A."/>
            <person name="Mizutani-Ui Y."/>
            <person name="Takahashi N.K."/>
            <person name="Sawano T."/>
            <person name="Inoue R."/>
            <person name="Kaito C."/>
            <person name="Sekimizu K."/>
            <person name="Hirakawa H."/>
            <person name="Kuhara S."/>
            <person name="Goto S."/>
            <person name="Yabuzaki J."/>
            <person name="Kanehisa M."/>
            <person name="Yamashita A."/>
            <person name="Oshima K."/>
            <person name="Furuya K."/>
            <person name="Yoshino C."/>
            <person name="Shiba T."/>
            <person name="Hattori M."/>
            <person name="Ogasawara N."/>
            <person name="Hayashi H."/>
            <person name="Hiramatsu K."/>
        </authorList>
    </citation>
    <scope>NUCLEOTIDE SEQUENCE [LARGE SCALE GENOMIC DNA]</scope>
    <source>
        <strain>N315</strain>
    </source>
</reference>
<dbReference type="EC" id="2.3.3.13" evidence="1"/>
<dbReference type="EMBL" id="BA000018">
    <property type="protein sequence ID" value="BAB43144.1"/>
    <property type="molecule type" value="Genomic_DNA"/>
</dbReference>
<dbReference type="PIR" id="G89997">
    <property type="entry name" value="G89997"/>
</dbReference>
<dbReference type="RefSeq" id="WP_000094583.1">
    <property type="nucleotide sequence ID" value="NC_002745.2"/>
</dbReference>
<dbReference type="SMR" id="P63477"/>
<dbReference type="EnsemblBacteria" id="BAB43144">
    <property type="protein sequence ID" value="BAB43144"/>
    <property type="gene ID" value="BAB43144"/>
</dbReference>
<dbReference type="KEGG" id="sau:SA1862"/>
<dbReference type="HOGENOM" id="CLU_022158_0_1_9"/>
<dbReference type="UniPathway" id="UPA00048">
    <property type="reaction ID" value="UER00070"/>
</dbReference>
<dbReference type="GO" id="GO:0005737">
    <property type="term" value="C:cytoplasm"/>
    <property type="evidence" value="ECO:0007669"/>
    <property type="project" value="UniProtKB-SubCell"/>
</dbReference>
<dbReference type="GO" id="GO:0003852">
    <property type="term" value="F:2-isopropylmalate synthase activity"/>
    <property type="evidence" value="ECO:0007669"/>
    <property type="project" value="UniProtKB-UniRule"/>
</dbReference>
<dbReference type="GO" id="GO:0003985">
    <property type="term" value="F:acetyl-CoA C-acetyltransferase activity"/>
    <property type="evidence" value="ECO:0007669"/>
    <property type="project" value="UniProtKB-UniRule"/>
</dbReference>
<dbReference type="GO" id="GO:0030145">
    <property type="term" value="F:manganese ion binding"/>
    <property type="evidence" value="ECO:0007669"/>
    <property type="project" value="UniProtKB-UniRule"/>
</dbReference>
<dbReference type="GO" id="GO:0009098">
    <property type="term" value="P:L-leucine biosynthetic process"/>
    <property type="evidence" value="ECO:0007669"/>
    <property type="project" value="UniProtKB-UniRule"/>
</dbReference>
<dbReference type="CDD" id="cd07940">
    <property type="entry name" value="DRE_TIM_IPMS"/>
    <property type="match status" value="1"/>
</dbReference>
<dbReference type="FunFam" id="1.10.238.260:FF:000001">
    <property type="entry name" value="2-isopropylmalate synthase"/>
    <property type="match status" value="1"/>
</dbReference>
<dbReference type="FunFam" id="3.20.20.70:FF:000010">
    <property type="entry name" value="2-isopropylmalate synthase"/>
    <property type="match status" value="1"/>
</dbReference>
<dbReference type="FunFam" id="3.30.160.270:FF:000003">
    <property type="entry name" value="2-isopropylmalate synthase"/>
    <property type="match status" value="1"/>
</dbReference>
<dbReference type="Gene3D" id="1.10.238.260">
    <property type="match status" value="1"/>
</dbReference>
<dbReference type="Gene3D" id="3.30.160.270">
    <property type="match status" value="1"/>
</dbReference>
<dbReference type="Gene3D" id="3.20.20.70">
    <property type="entry name" value="Aldolase class I"/>
    <property type="match status" value="1"/>
</dbReference>
<dbReference type="HAMAP" id="MF_01025">
    <property type="entry name" value="LeuA_type1"/>
    <property type="match status" value="1"/>
</dbReference>
<dbReference type="InterPro" id="IPR050073">
    <property type="entry name" value="2-IPM_HCS-like"/>
</dbReference>
<dbReference type="InterPro" id="IPR013709">
    <property type="entry name" value="2-isopropylmalate_synth_dimer"/>
</dbReference>
<dbReference type="InterPro" id="IPR013785">
    <property type="entry name" value="Aldolase_TIM"/>
</dbReference>
<dbReference type="InterPro" id="IPR054691">
    <property type="entry name" value="LeuA/HCS_post-cat"/>
</dbReference>
<dbReference type="InterPro" id="IPR036230">
    <property type="entry name" value="LeuA_allosteric_dom_sf"/>
</dbReference>
<dbReference type="InterPro" id="IPR005671">
    <property type="entry name" value="LeuA_bact_synth"/>
</dbReference>
<dbReference type="InterPro" id="IPR000891">
    <property type="entry name" value="PYR_CT"/>
</dbReference>
<dbReference type="NCBIfam" id="TIGR00973">
    <property type="entry name" value="leuA_bact"/>
    <property type="match status" value="1"/>
</dbReference>
<dbReference type="NCBIfam" id="NF002086">
    <property type="entry name" value="PRK00915.1-3"/>
    <property type="match status" value="1"/>
</dbReference>
<dbReference type="NCBIfam" id="NF002088">
    <property type="entry name" value="PRK00915.1-5"/>
    <property type="match status" value="1"/>
</dbReference>
<dbReference type="PANTHER" id="PTHR10277:SF9">
    <property type="entry name" value="2-ISOPROPYLMALATE SYNTHASE 1, CHLOROPLASTIC-RELATED"/>
    <property type="match status" value="1"/>
</dbReference>
<dbReference type="PANTHER" id="PTHR10277">
    <property type="entry name" value="HOMOCITRATE SYNTHASE-RELATED"/>
    <property type="match status" value="1"/>
</dbReference>
<dbReference type="Pfam" id="PF22617">
    <property type="entry name" value="HCS_D2"/>
    <property type="match status" value="1"/>
</dbReference>
<dbReference type="Pfam" id="PF00682">
    <property type="entry name" value="HMGL-like"/>
    <property type="match status" value="1"/>
</dbReference>
<dbReference type="Pfam" id="PF08502">
    <property type="entry name" value="LeuA_dimer"/>
    <property type="match status" value="1"/>
</dbReference>
<dbReference type="SMART" id="SM00917">
    <property type="entry name" value="LeuA_dimer"/>
    <property type="match status" value="1"/>
</dbReference>
<dbReference type="SUPFAM" id="SSF110921">
    <property type="entry name" value="2-isopropylmalate synthase LeuA, allosteric (dimerisation) domain"/>
    <property type="match status" value="1"/>
</dbReference>
<dbReference type="SUPFAM" id="SSF51569">
    <property type="entry name" value="Aldolase"/>
    <property type="match status" value="1"/>
</dbReference>
<dbReference type="PROSITE" id="PS50991">
    <property type="entry name" value="PYR_CT"/>
    <property type="match status" value="1"/>
</dbReference>
<gene>
    <name evidence="1" type="primary">leuA</name>
    <name type="ordered locus">SA1862</name>
</gene>
<name>LEU1_STAAN</name>
<keyword id="KW-0028">Amino-acid biosynthesis</keyword>
<keyword id="KW-0100">Branched-chain amino acid biosynthesis</keyword>
<keyword id="KW-0963">Cytoplasm</keyword>
<keyword id="KW-0432">Leucine biosynthesis</keyword>
<keyword id="KW-0464">Manganese</keyword>
<keyword id="KW-0479">Metal-binding</keyword>
<keyword id="KW-0808">Transferase</keyword>
<protein>
    <recommendedName>
        <fullName evidence="1">2-isopropylmalate synthase</fullName>
        <ecNumber evidence="1">2.3.3.13</ecNumber>
    </recommendedName>
    <alternativeName>
        <fullName evidence="1">Alpha-IPM synthase</fullName>
    </alternativeName>
    <alternativeName>
        <fullName evidence="1">Alpha-isopropylmalate synthase</fullName>
    </alternativeName>
</protein>
<proteinExistence type="inferred from homology"/>
<feature type="chain" id="PRO_0000140380" description="2-isopropylmalate synthase">
    <location>
        <begin position="1"/>
        <end position="509"/>
    </location>
</feature>
<feature type="domain" description="Pyruvate carboxyltransferase" evidence="1">
    <location>
        <begin position="5"/>
        <end position="267"/>
    </location>
</feature>
<feature type="region of interest" description="Regulatory domain" evidence="1">
    <location>
        <begin position="391"/>
        <end position="509"/>
    </location>
</feature>
<feature type="binding site" evidence="1">
    <location>
        <position position="14"/>
    </location>
    <ligand>
        <name>Mn(2+)</name>
        <dbReference type="ChEBI" id="CHEBI:29035"/>
    </ligand>
</feature>
<feature type="binding site" evidence="1">
    <location>
        <position position="202"/>
    </location>
    <ligand>
        <name>Mn(2+)</name>
        <dbReference type="ChEBI" id="CHEBI:29035"/>
    </ligand>
</feature>
<feature type="binding site" evidence="1">
    <location>
        <position position="204"/>
    </location>
    <ligand>
        <name>Mn(2+)</name>
        <dbReference type="ChEBI" id="CHEBI:29035"/>
    </ligand>
</feature>
<feature type="binding site" evidence="1">
    <location>
        <position position="238"/>
    </location>
    <ligand>
        <name>Mn(2+)</name>
        <dbReference type="ChEBI" id="CHEBI:29035"/>
    </ligand>
</feature>
<evidence type="ECO:0000255" key="1">
    <source>
        <dbReference type="HAMAP-Rule" id="MF_01025"/>
    </source>
</evidence>
<comment type="function">
    <text evidence="1">Catalyzes the condensation of the acetyl group of acetyl-CoA with 3-methyl-2-oxobutanoate (2-ketoisovalerate) to form 3-carboxy-3-hydroxy-4-methylpentanoate (2-isopropylmalate).</text>
</comment>
<comment type="catalytic activity">
    <reaction evidence="1">
        <text>3-methyl-2-oxobutanoate + acetyl-CoA + H2O = (2S)-2-isopropylmalate + CoA + H(+)</text>
        <dbReference type="Rhea" id="RHEA:21524"/>
        <dbReference type="ChEBI" id="CHEBI:1178"/>
        <dbReference type="ChEBI" id="CHEBI:11851"/>
        <dbReference type="ChEBI" id="CHEBI:15377"/>
        <dbReference type="ChEBI" id="CHEBI:15378"/>
        <dbReference type="ChEBI" id="CHEBI:57287"/>
        <dbReference type="ChEBI" id="CHEBI:57288"/>
        <dbReference type="EC" id="2.3.3.13"/>
    </reaction>
</comment>
<comment type="cofactor">
    <cofactor evidence="1">
        <name>Mn(2+)</name>
        <dbReference type="ChEBI" id="CHEBI:29035"/>
    </cofactor>
</comment>
<comment type="pathway">
    <text evidence="1">Amino-acid biosynthesis; L-leucine biosynthesis; L-leucine from 3-methyl-2-oxobutanoate: step 1/4.</text>
</comment>
<comment type="subunit">
    <text evidence="1">Homodimer.</text>
</comment>
<comment type="subcellular location">
    <subcellularLocation>
        <location evidence="1">Cytoplasm</location>
    </subcellularLocation>
</comment>
<comment type="similarity">
    <text evidence="1">Belongs to the alpha-IPM synthase/homocitrate synthase family. LeuA type 1 subfamily.</text>
</comment>
<sequence length="509" mass="55704">MSSHIQIFDTTLRDGEQTPGVNFTFDERLRIALQLEKWGVDVIEAGFPASSTGSFKSVQAIAQTLTTTAVCGLARCKKSDIDAVYEATKDAAKPVVHVFIATSPIHLEHKLKMSQEDVLASIKEHVTYAKQLFDVVQFSPEDATRTELPFLVKCVQTAVDAGATVINIPDTVGYSYHDEYAHIFKTLTESVTSSNEIIYSAHCHDDLGMAVSNSLAAIEGGARRIEGTVNGIGERAGNAALEEVALALYVRNDHYGAQTALNLEETKKTSDLISRYAGIRVPRNKAIVGQNAFSHESGIHQDGVLKHRETYEIMTPQLVGVSTTELPLGKLSGKHAFSEKLKALGYNIDKEAQIDLFKQFKTIADKKKSVSDRDIHAIIQGSEHEHQALYKLETLQLQYVSSGLQSAVVVVKDKEGHIYQDSSIGTGSIVAIYNAVDRIFQKETELIDYRINSVTEGTDAQAEVHVNLLIEGKTVNGFGIDHDILQASCKAYVEAHAKFAAENVEKVGN</sequence>
<organism>
    <name type="scientific">Staphylococcus aureus (strain N315)</name>
    <dbReference type="NCBI Taxonomy" id="158879"/>
    <lineage>
        <taxon>Bacteria</taxon>
        <taxon>Bacillati</taxon>
        <taxon>Bacillota</taxon>
        <taxon>Bacilli</taxon>
        <taxon>Bacillales</taxon>
        <taxon>Staphylococcaceae</taxon>
        <taxon>Staphylococcus</taxon>
    </lineage>
</organism>
<accession>P63477</accession>
<accession>Q99SJ5</accession>